<evidence type="ECO:0000255" key="1">
    <source>
        <dbReference type="HAMAP-Rule" id="MF_01031"/>
    </source>
</evidence>
<gene>
    <name evidence="1" type="primary">leuD</name>
    <name type="ordered locus">Fphi_0771</name>
</gene>
<name>LEUD_FRAP2</name>
<proteinExistence type="inferred from homology"/>
<comment type="function">
    <text evidence="1">Catalyzes the isomerization between 2-isopropylmalate and 3-isopropylmalate, via the formation of 2-isopropylmaleate.</text>
</comment>
<comment type="catalytic activity">
    <reaction evidence="1">
        <text>(2R,3S)-3-isopropylmalate = (2S)-2-isopropylmalate</text>
        <dbReference type="Rhea" id="RHEA:32287"/>
        <dbReference type="ChEBI" id="CHEBI:1178"/>
        <dbReference type="ChEBI" id="CHEBI:35121"/>
        <dbReference type="EC" id="4.2.1.33"/>
    </reaction>
</comment>
<comment type="pathway">
    <text evidence="1">Amino-acid biosynthesis; L-leucine biosynthesis; L-leucine from 3-methyl-2-oxobutanoate: step 2/4.</text>
</comment>
<comment type="subunit">
    <text evidence="1">Heterodimer of LeuC and LeuD.</text>
</comment>
<comment type="similarity">
    <text evidence="1">Belongs to the LeuD family. LeuD type 1 subfamily.</text>
</comment>
<accession>B0TW84</accession>
<keyword id="KW-0028">Amino-acid biosynthesis</keyword>
<keyword id="KW-0100">Branched-chain amino acid biosynthesis</keyword>
<keyword id="KW-0432">Leucine biosynthesis</keyword>
<keyword id="KW-0456">Lyase</keyword>
<reference key="1">
    <citation type="submission" date="2007-12" db="EMBL/GenBank/DDBJ databases">
        <title>Complete sequence of chromosome of Francisella philomiragia subsp. philomiragia ATCC 25017.</title>
        <authorList>
            <consortium name="US DOE Joint Genome Institute"/>
            <person name="Copeland A."/>
            <person name="Lucas S."/>
            <person name="Lapidus A."/>
            <person name="Barry K."/>
            <person name="Detter J.C."/>
            <person name="Glavina del Rio T."/>
            <person name="Hammon N."/>
            <person name="Israni S."/>
            <person name="Dalin E."/>
            <person name="Tice H."/>
            <person name="Pitluck S."/>
            <person name="Chain P."/>
            <person name="Malfatti S."/>
            <person name="Shin M."/>
            <person name="Vergez L."/>
            <person name="Schmutz J."/>
            <person name="Larimer F."/>
            <person name="Land M."/>
            <person name="Hauser L."/>
            <person name="Richardson P."/>
        </authorList>
    </citation>
    <scope>NUCLEOTIDE SEQUENCE [LARGE SCALE GENOMIC DNA]</scope>
    <source>
        <strain>ATCC 25017 / CCUG 19701 / FSC 153 / O#319-036</strain>
    </source>
</reference>
<organism>
    <name type="scientific">Francisella philomiragia subsp. philomiragia (strain ATCC 25017 / CCUG 19701 / FSC 153 / O#319-036)</name>
    <dbReference type="NCBI Taxonomy" id="484022"/>
    <lineage>
        <taxon>Bacteria</taxon>
        <taxon>Pseudomonadati</taxon>
        <taxon>Pseudomonadota</taxon>
        <taxon>Gammaproteobacteria</taxon>
        <taxon>Thiotrichales</taxon>
        <taxon>Francisellaceae</taxon>
        <taxon>Francisella</taxon>
    </lineage>
</organism>
<sequence length="189" mass="21267">MQAFKKLTSSAIPLWLSDIDTDMIIPANFLTQTTKDGYGKSLFHNLKEKDSSFIFNNPDYSNSEILIAGDNFGCGSSREHAVWALTQAGIKVIIAPSFSDIFFNNAAKNGLLLISLDKDTVKELCDKAEDPKFSMTVDLQEQTVNVDGSIYSFDYDPFRKDCLIRGLDDMTYLIEHLDIIKQFEQSQRG</sequence>
<dbReference type="EC" id="4.2.1.33" evidence="1"/>
<dbReference type="EMBL" id="CP000937">
    <property type="protein sequence ID" value="ABZ86992.1"/>
    <property type="molecule type" value="Genomic_DNA"/>
</dbReference>
<dbReference type="SMR" id="B0TW84"/>
<dbReference type="KEGG" id="fph:Fphi_0771"/>
<dbReference type="eggNOG" id="COG0066">
    <property type="taxonomic scope" value="Bacteria"/>
</dbReference>
<dbReference type="HOGENOM" id="CLU_081378_0_3_6"/>
<dbReference type="UniPathway" id="UPA00048">
    <property type="reaction ID" value="UER00071"/>
</dbReference>
<dbReference type="GO" id="GO:0009316">
    <property type="term" value="C:3-isopropylmalate dehydratase complex"/>
    <property type="evidence" value="ECO:0007669"/>
    <property type="project" value="InterPro"/>
</dbReference>
<dbReference type="GO" id="GO:0003861">
    <property type="term" value="F:3-isopropylmalate dehydratase activity"/>
    <property type="evidence" value="ECO:0007669"/>
    <property type="project" value="UniProtKB-UniRule"/>
</dbReference>
<dbReference type="GO" id="GO:0009098">
    <property type="term" value="P:L-leucine biosynthetic process"/>
    <property type="evidence" value="ECO:0007669"/>
    <property type="project" value="UniProtKB-UniRule"/>
</dbReference>
<dbReference type="CDD" id="cd01577">
    <property type="entry name" value="IPMI_Swivel"/>
    <property type="match status" value="1"/>
</dbReference>
<dbReference type="FunFam" id="3.20.19.10:FF:000003">
    <property type="entry name" value="3-isopropylmalate dehydratase small subunit"/>
    <property type="match status" value="1"/>
</dbReference>
<dbReference type="Gene3D" id="3.20.19.10">
    <property type="entry name" value="Aconitase, domain 4"/>
    <property type="match status" value="1"/>
</dbReference>
<dbReference type="HAMAP" id="MF_01031">
    <property type="entry name" value="LeuD_type1"/>
    <property type="match status" value="1"/>
</dbReference>
<dbReference type="InterPro" id="IPR004431">
    <property type="entry name" value="3-IsopropMal_deHydase_ssu"/>
</dbReference>
<dbReference type="InterPro" id="IPR015928">
    <property type="entry name" value="Aconitase/3IPM_dehydase_swvl"/>
</dbReference>
<dbReference type="InterPro" id="IPR000573">
    <property type="entry name" value="AconitaseA/IPMdHydase_ssu_swvl"/>
</dbReference>
<dbReference type="InterPro" id="IPR033940">
    <property type="entry name" value="IPMI_Swivel"/>
</dbReference>
<dbReference type="InterPro" id="IPR050075">
    <property type="entry name" value="LeuD"/>
</dbReference>
<dbReference type="NCBIfam" id="TIGR00171">
    <property type="entry name" value="leuD"/>
    <property type="match status" value="1"/>
</dbReference>
<dbReference type="NCBIfam" id="NF002458">
    <property type="entry name" value="PRK01641.1"/>
    <property type="match status" value="1"/>
</dbReference>
<dbReference type="PANTHER" id="PTHR43345:SF5">
    <property type="entry name" value="3-ISOPROPYLMALATE DEHYDRATASE SMALL SUBUNIT"/>
    <property type="match status" value="1"/>
</dbReference>
<dbReference type="PANTHER" id="PTHR43345">
    <property type="entry name" value="3-ISOPROPYLMALATE DEHYDRATASE SMALL SUBUNIT 2-RELATED-RELATED"/>
    <property type="match status" value="1"/>
</dbReference>
<dbReference type="Pfam" id="PF00694">
    <property type="entry name" value="Aconitase_C"/>
    <property type="match status" value="1"/>
</dbReference>
<dbReference type="SUPFAM" id="SSF52016">
    <property type="entry name" value="LeuD/IlvD-like"/>
    <property type="match status" value="1"/>
</dbReference>
<feature type="chain" id="PRO_1000084252" description="3-isopropylmalate dehydratase small subunit">
    <location>
        <begin position="1"/>
        <end position="189"/>
    </location>
</feature>
<protein>
    <recommendedName>
        <fullName evidence="1">3-isopropylmalate dehydratase small subunit</fullName>
        <ecNumber evidence="1">4.2.1.33</ecNumber>
    </recommendedName>
    <alternativeName>
        <fullName evidence="1">Alpha-IPM isomerase</fullName>
        <shortName evidence="1">IPMI</shortName>
    </alternativeName>
    <alternativeName>
        <fullName evidence="1">Isopropylmalate isomerase</fullName>
    </alternativeName>
</protein>